<proteinExistence type="inferred from homology"/>
<feature type="chain" id="PRO_1000045307" description="Probable transcriptional regulatory protein FP0835">
    <location>
        <begin position="1"/>
        <end position="236"/>
    </location>
</feature>
<evidence type="ECO:0000255" key="1">
    <source>
        <dbReference type="HAMAP-Rule" id="MF_00693"/>
    </source>
</evidence>
<accession>A6GXW2</accession>
<protein>
    <recommendedName>
        <fullName evidence="1">Probable transcriptional regulatory protein FP0835</fullName>
    </recommendedName>
</protein>
<reference key="1">
    <citation type="journal article" date="2007" name="Nat. Biotechnol.">
        <title>Complete genome sequence of the fish pathogen Flavobacterium psychrophilum.</title>
        <authorList>
            <person name="Duchaud E."/>
            <person name="Boussaha M."/>
            <person name="Loux V."/>
            <person name="Bernardet J.-F."/>
            <person name="Michel C."/>
            <person name="Kerouault B."/>
            <person name="Mondot S."/>
            <person name="Nicolas P."/>
            <person name="Bossy R."/>
            <person name="Caron C."/>
            <person name="Bessieres P."/>
            <person name="Gibrat J.-F."/>
            <person name="Claverol S."/>
            <person name="Dumetz F."/>
            <person name="Le Henaff M."/>
            <person name="Benmansour A."/>
        </authorList>
    </citation>
    <scope>NUCLEOTIDE SEQUENCE [LARGE SCALE GENOMIC DNA]</scope>
    <source>
        <strain>ATCC 49511 / DSM 21280 / CIP 103535 / JIP02/86</strain>
    </source>
</reference>
<sequence>MGRAFEFRKGRKMKRWSAMAKAFTRIGKDIVMAVKEGGPNPEANSRLRAVIQNSKAVNMPKENVERAIKKATDKDTANYKEILFEGYAPHGIAILIETASDNNNRTVANIRSYFNKCNGTMGTQGSVEFMFDHTCNFRIPANGMDPEELELELIDFGAEEVFEDEDGILIYAPFGSFGTIQKELETRGIEILSSGFERIPQITKELTEAQIADVEKLIEKIEEDEDVMNVYHTMQE</sequence>
<keyword id="KW-0963">Cytoplasm</keyword>
<keyword id="KW-0238">DNA-binding</keyword>
<keyword id="KW-1185">Reference proteome</keyword>
<keyword id="KW-0804">Transcription</keyword>
<keyword id="KW-0805">Transcription regulation</keyword>
<name>Y835_FLAPJ</name>
<dbReference type="EMBL" id="AM398681">
    <property type="protein sequence ID" value="CAL42935.1"/>
    <property type="molecule type" value="Genomic_DNA"/>
</dbReference>
<dbReference type="RefSeq" id="WP_011962991.1">
    <property type="nucleotide sequence ID" value="NC_009613.3"/>
</dbReference>
<dbReference type="RefSeq" id="YP_001295751.1">
    <property type="nucleotide sequence ID" value="NC_009613.3"/>
</dbReference>
<dbReference type="SMR" id="A6GXW2"/>
<dbReference type="STRING" id="402612.FP0835"/>
<dbReference type="EnsemblBacteria" id="CAL42935">
    <property type="protein sequence ID" value="CAL42935"/>
    <property type="gene ID" value="FP0835"/>
</dbReference>
<dbReference type="KEGG" id="fps:FP0835"/>
<dbReference type="PATRIC" id="fig|402612.5.peg.847"/>
<dbReference type="eggNOG" id="COG0217">
    <property type="taxonomic scope" value="Bacteria"/>
</dbReference>
<dbReference type="HOGENOM" id="CLU_062974_3_0_10"/>
<dbReference type="OrthoDB" id="9781053at2"/>
<dbReference type="Proteomes" id="UP000006394">
    <property type="component" value="Chromosome"/>
</dbReference>
<dbReference type="GO" id="GO:0005829">
    <property type="term" value="C:cytosol"/>
    <property type="evidence" value="ECO:0007669"/>
    <property type="project" value="TreeGrafter"/>
</dbReference>
<dbReference type="GO" id="GO:0003677">
    <property type="term" value="F:DNA binding"/>
    <property type="evidence" value="ECO:0007669"/>
    <property type="project" value="UniProtKB-UniRule"/>
</dbReference>
<dbReference type="GO" id="GO:0006355">
    <property type="term" value="P:regulation of DNA-templated transcription"/>
    <property type="evidence" value="ECO:0007669"/>
    <property type="project" value="UniProtKB-UniRule"/>
</dbReference>
<dbReference type="FunFam" id="1.10.10.200:FF:000004">
    <property type="entry name" value="Probable transcriptional regulatory protein BSBG_02618"/>
    <property type="match status" value="1"/>
</dbReference>
<dbReference type="Gene3D" id="1.10.10.200">
    <property type="match status" value="1"/>
</dbReference>
<dbReference type="Gene3D" id="3.30.70.980">
    <property type="match status" value="2"/>
</dbReference>
<dbReference type="HAMAP" id="MF_00693">
    <property type="entry name" value="Transcrip_reg_TACO1"/>
    <property type="match status" value="1"/>
</dbReference>
<dbReference type="InterPro" id="IPR017856">
    <property type="entry name" value="Integrase-like_N"/>
</dbReference>
<dbReference type="InterPro" id="IPR048300">
    <property type="entry name" value="TACO1_YebC-like_2nd/3rd_dom"/>
</dbReference>
<dbReference type="InterPro" id="IPR049083">
    <property type="entry name" value="TACO1_YebC_N"/>
</dbReference>
<dbReference type="InterPro" id="IPR002876">
    <property type="entry name" value="Transcrip_reg_TACO1-like"/>
</dbReference>
<dbReference type="InterPro" id="IPR026564">
    <property type="entry name" value="Transcrip_reg_TACO1-like_dom3"/>
</dbReference>
<dbReference type="InterPro" id="IPR029072">
    <property type="entry name" value="YebC-like"/>
</dbReference>
<dbReference type="NCBIfam" id="NF009044">
    <property type="entry name" value="PRK12378.1"/>
    <property type="match status" value="1"/>
</dbReference>
<dbReference type="NCBIfam" id="TIGR01033">
    <property type="entry name" value="YebC/PmpR family DNA-binding transcriptional regulator"/>
    <property type="match status" value="1"/>
</dbReference>
<dbReference type="PANTHER" id="PTHR12532:SF6">
    <property type="entry name" value="TRANSCRIPTIONAL REGULATORY PROTEIN YEBC-RELATED"/>
    <property type="match status" value="1"/>
</dbReference>
<dbReference type="PANTHER" id="PTHR12532">
    <property type="entry name" value="TRANSLATIONAL ACTIVATOR OF CYTOCHROME C OXIDASE 1"/>
    <property type="match status" value="1"/>
</dbReference>
<dbReference type="Pfam" id="PF20772">
    <property type="entry name" value="TACO1_YebC_N"/>
    <property type="match status" value="1"/>
</dbReference>
<dbReference type="Pfam" id="PF01709">
    <property type="entry name" value="Transcrip_reg"/>
    <property type="match status" value="1"/>
</dbReference>
<dbReference type="SUPFAM" id="SSF75625">
    <property type="entry name" value="YebC-like"/>
    <property type="match status" value="1"/>
</dbReference>
<organism>
    <name type="scientific">Flavobacterium psychrophilum (strain ATCC 49511 / DSM 21280 / CIP 103535 / JIP02/86)</name>
    <dbReference type="NCBI Taxonomy" id="402612"/>
    <lineage>
        <taxon>Bacteria</taxon>
        <taxon>Pseudomonadati</taxon>
        <taxon>Bacteroidota</taxon>
        <taxon>Flavobacteriia</taxon>
        <taxon>Flavobacteriales</taxon>
        <taxon>Flavobacteriaceae</taxon>
        <taxon>Flavobacterium</taxon>
    </lineage>
</organism>
<gene>
    <name type="ordered locus">FP0835</name>
</gene>
<comment type="subcellular location">
    <subcellularLocation>
        <location evidence="1">Cytoplasm</location>
    </subcellularLocation>
</comment>
<comment type="similarity">
    <text evidence="1">Belongs to the TACO1 family.</text>
</comment>